<sequence length="316" mass="36163">MYEWLNALPKAELHLHLEGTLEPELLFALAERNRIALPWNDVETLRKAYAFNNLQEFLDLYYAGADVLRTEQDFYDLTWAYLQKCKAQNVVHVEPFFDPQTHTDRGIPFEVVLAGIRAALRDGEKLLGIRHGLILSFLRHLSEEQAQKTLDQALPFRDAFIAVGLDSSEVGHPPSKFQRVFDRARSEGFLTVAHAGEEGPPEYIWEALDLLKVERIDHGVRAFEDERLMRRLIDEQIPLTVCPLSNTKLCVFDDMSQHTILDMLERGVKVTVNSDDPAYFGGYVTENFHALQQSLGMTEEQARRLAQNSLDARLVK</sequence>
<proteinExistence type="evidence at protein level"/>
<evidence type="ECO:0000255" key="1">
    <source>
        <dbReference type="HAMAP-Rule" id="MF_01962"/>
    </source>
</evidence>
<evidence type="ECO:0000269" key="2">
    <source ref="2"/>
</evidence>
<evidence type="ECO:0007829" key="3">
    <source>
        <dbReference type="PDB" id="3PAO"/>
    </source>
</evidence>
<organism>
    <name type="scientific">Pseudomonas aeruginosa (strain ATCC 15692 / DSM 22644 / CIP 104116 / JCM 14847 / LMG 12228 / 1C / PRS 101 / PAO1)</name>
    <dbReference type="NCBI Taxonomy" id="208964"/>
    <lineage>
        <taxon>Bacteria</taxon>
        <taxon>Pseudomonadati</taxon>
        <taxon>Pseudomonadota</taxon>
        <taxon>Gammaproteobacteria</taxon>
        <taxon>Pseudomonadales</taxon>
        <taxon>Pseudomonadaceae</taxon>
        <taxon>Pseudomonas</taxon>
    </lineage>
</organism>
<comment type="function">
    <text evidence="1">Catalyzes the hydrolytic deamination of adenine to hypoxanthine. Plays an important role in the purine salvage pathway and in nitrogen catabolism.</text>
</comment>
<comment type="catalytic activity">
    <reaction evidence="1">
        <text>adenine + H2O + H(+) = hypoxanthine + NH4(+)</text>
        <dbReference type="Rhea" id="RHEA:23688"/>
        <dbReference type="ChEBI" id="CHEBI:15377"/>
        <dbReference type="ChEBI" id="CHEBI:15378"/>
        <dbReference type="ChEBI" id="CHEBI:16708"/>
        <dbReference type="ChEBI" id="CHEBI:17368"/>
        <dbReference type="ChEBI" id="CHEBI:28938"/>
        <dbReference type="EC" id="3.5.4.2"/>
    </reaction>
</comment>
<comment type="cofactor">
    <cofactor evidence="1 2">
        <name>Zn(2+)</name>
        <dbReference type="ChEBI" id="CHEBI:29105"/>
    </cofactor>
    <text evidence="1 2">Binds 1 zinc ion per subunit.</text>
</comment>
<comment type="similarity">
    <text evidence="1">Belongs to the metallo-dependent hydrolases superfamily. Adenosine and AMP deaminases family. Adenine deaminase type 2 subfamily.</text>
</comment>
<reference key="1">
    <citation type="journal article" date="2000" name="Nature">
        <title>Complete genome sequence of Pseudomonas aeruginosa PAO1, an opportunistic pathogen.</title>
        <authorList>
            <person name="Stover C.K."/>
            <person name="Pham X.-Q.T."/>
            <person name="Erwin A.L."/>
            <person name="Mizoguchi S.D."/>
            <person name="Warrener P."/>
            <person name="Hickey M.J."/>
            <person name="Brinkman F.S.L."/>
            <person name="Hufnagle W.O."/>
            <person name="Kowalik D.J."/>
            <person name="Lagrou M."/>
            <person name="Garber R.L."/>
            <person name="Goltry L."/>
            <person name="Tolentino E."/>
            <person name="Westbrock-Wadman S."/>
            <person name="Yuan Y."/>
            <person name="Brody L.L."/>
            <person name="Coulter S.N."/>
            <person name="Folger K.R."/>
            <person name="Kas A."/>
            <person name="Larbig K."/>
            <person name="Lim R.M."/>
            <person name="Smith K.A."/>
            <person name="Spencer D.H."/>
            <person name="Wong G.K.-S."/>
            <person name="Wu Z."/>
            <person name="Paulsen I.T."/>
            <person name="Reizer J."/>
            <person name="Saier M.H. Jr."/>
            <person name="Hancock R.E.W."/>
            <person name="Lory S."/>
            <person name="Olson M.V."/>
        </authorList>
    </citation>
    <scope>NUCLEOTIDE SEQUENCE [LARGE SCALE GENOMIC DNA]</scope>
    <source>
        <strain>ATCC 15692 / DSM 22644 / CIP 104116 / JCM 14847 / LMG 12228 / 1C / PRS 101 / PAO1</strain>
    </source>
</reference>
<reference key="2">
    <citation type="submission" date="2010-12" db="PDB data bank">
        <title>The crystal structure of adenosine deaminase in complex with adenine, chloropurine and hypoxanthine from pseudomonas aeruginosa.</title>
        <authorList>
            <consortium name="New York structural genomix research consortium (NYSGXRC)"/>
        </authorList>
    </citation>
    <scope>X-RAY CRYSTALLOGRAPHY (2.49 ANGSTROMS) OF 2-316 IN COMPLEX WITH ADENINE; CHLOROPURINE; HYPOXANTHINE AND ZINC</scope>
</reference>
<accession>Q9I6Y4</accession>
<gene>
    <name type="ordered locus">PA0148</name>
</gene>
<name>ADE_PSEAE</name>
<feature type="chain" id="PRO_0000194377" description="Adenine deaminase">
    <location>
        <begin position="1"/>
        <end position="316"/>
    </location>
</feature>
<feature type="active site" description="Proton donor">
    <location>
        <position position="197"/>
    </location>
</feature>
<feature type="binding site" evidence="2">
    <location>
        <position position="14"/>
    </location>
    <ligand>
        <name>Zn(2+)</name>
        <dbReference type="ChEBI" id="CHEBI:29105"/>
        <note>catalytic</note>
    </ligand>
</feature>
<feature type="binding site" evidence="2">
    <location>
        <position position="16"/>
    </location>
    <ligand>
        <name>Zn(2+)</name>
        <dbReference type="ChEBI" id="CHEBI:29105"/>
        <note>catalytic</note>
    </ligand>
</feature>
<feature type="binding site" evidence="2">
    <location>
        <position position="194"/>
    </location>
    <ligand>
        <name>Zn(2+)</name>
        <dbReference type="ChEBI" id="CHEBI:29105"/>
        <note>catalytic</note>
    </ligand>
</feature>
<feature type="binding site" evidence="2">
    <location>
        <position position="275"/>
    </location>
    <ligand>
        <name>Zn(2+)</name>
        <dbReference type="ChEBI" id="CHEBI:29105"/>
        <note>catalytic</note>
    </ligand>
</feature>
<feature type="binding site">
    <location>
        <position position="276"/>
    </location>
    <ligand>
        <name>substrate</name>
    </ligand>
</feature>
<feature type="site" description="Important for catalytic activity" evidence="1">
    <location>
        <position position="218"/>
    </location>
</feature>
<feature type="helix" evidence="3">
    <location>
        <begin position="3"/>
        <end position="7"/>
    </location>
</feature>
<feature type="strand" evidence="3">
    <location>
        <begin position="10"/>
        <end position="12"/>
    </location>
</feature>
<feature type="strand" evidence="3">
    <location>
        <begin position="14"/>
        <end position="16"/>
    </location>
</feature>
<feature type="helix" evidence="3">
    <location>
        <begin position="17"/>
        <end position="20"/>
    </location>
</feature>
<feature type="helix" evidence="3">
    <location>
        <begin position="23"/>
        <end position="32"/>
    </location>
</feature>
<feature type="strand" evidence="3">
    <location>
        <begin position="38"/>
        <end position="41"/>
    </location>
</feature>
<feature type="helix" evidence="3">
    <location>
        <begin position="42"/>
        <end position="47"/>
    </location>
</feature>
<feature type="helix" evidence="3">
    <location>
        <begin position="54"/>
        <end position="64"/>
    </location>
</feature>
<feature type="helix" evidence="3">
    <location>
        <begin position="65"/>
        <end position="67"/>
    </location>
</feature>
<feature type="helix" evidence="3">
    <location>
        <begin position="71"/>
        <end position="87"/>
    </location>
</feature>
<feature type="strand" evidence="3">
    <location>
        <begin position="90"/>
        <end position="93"/>
    </location>
</feature>
<feature type="helix" evidence="3">
    <location>
        <begin position="99"/>
        <end position="103"/>
    </location>
</feature>
<feature type="turn" evidence="3">
    <location>
        <begin position="104"/>
        <end position="106"/>
    </location>
</feature>
<feature type="helix" evidence="3">
    <location>
        <begin position="109"/>
        <end position="127"/>
    </location>
</feature>
<feature type="strand" evidence="3">
    <location>
        <begin position="134"/>
        <end position="138"/>
    </location>
</feature>
<feature type="helix" evidence="3">
    <location>
        <begin position="143"/>
        <end position="153"/>
    </location>
</feature>
<feature type="helix" evidence="3">
    <location>
        <begin position="154"/>
        <end position="159"/>
    </location>
</feature>
<feature type="strand" evidence="3">
    <location>
        <begin position="161"/>
        <end position="167"/>
    </location>
</feature>
<feature type="helix" evidence="3">
    <location>
        <begin position="174"/>
        <end position="177"/>
    </location>
</feature>
<feature type="helix" evidence="3">
    <location>
        <begin position="178"/>
        <end position="186"/>
    </location>
</feature>
<feature type="strand" evidence="3">
    <location>
        <begin position="193"/>
        <end position="199"/>
    </location>
</feature>
<feature type="helix" evidence="3">
    <location>
        <begin position="201"/>
        <end position="209"/>
    </location>
</feature>
<feature type="strand" evidence="3">
    <location>
        <begin position="214"/>
        <end position="218"/>
    </location>
</feature>
<feature type="helix" evidence="3">
    <location>
        <begin position="220"/>
        <end position="224"/>
    </location>
</feature>
<feature type="helix" evidence="3">
    <location>
        <begin position="226"/>
        <end position="235"/>
    </location>
</feature>
<feature type="strand" evidence="3">
    <location>
        <begin position="239"/>
        <end position="241"/>
    </location>
</feature>
<feature type="helix" evidence="3">
    <location>
        <begin position="243"/>
        <end position="248"/>
    </location>
</feature>
<feature type="strand" evidence="3">
    <location>
        <begin position="251"/>
        <end position="254"/>
    </location>
</feature>
<feature type="helix" evidence="3">
    <location>
        <begin position="255"/>
        <end position="257"/>
    </location>
</feature>
<feature type="helix" evidence="3">
    <location>
        <begin position="260"/>
        <end position="266"/>
    </location>
</feature>
<feature type="strand" evidence="3">
    <location>
        <begin position="270"/>
        <end position="272"/>
    </location>
</feature>
<feature type="helix" evidence="3">
    <location>
        <begin position="277"/>
        <end position="280"/>
    </location>
</feature>
<feature type="helix" evidence="3">
    <location>
        <begin position="284"/>
        <end position="295"/>
    </location>
</feature>
<feature type="helix" evidence="3">
    <location>
        <begin position="299"/>
        <end position="311"/>
    </location>
</feature>
<keyword id="KW-0002">3D-structure</keyword>
<keyword id="KW-0378">Hydrolase</keyword>
<keyword id="KW-0479">Metal-binding</keyword>
<keyword id="KW-0546">Nucleotide metabolism</keyword>
<keyword id="KW-1185">Reference proteome</keyword>
<keyword id="KW-0862">Zinc</keyword>
<dbReference type="EC" id="3.5.4.2" evidence="1"/>
<dbReference type="EMBL" id="AE004091">
    <property type="protein sequence ID" value="AAG03538.1"/>
    <property type="molecule type" value="Genomic_DNA"/>
</dbReference>
<dbReference type="PIR" id="H83625">
    <property type="entry name" value="H83625"/>
</dbReference>
<dbReference type="RefSeq" id="NP_248838.1">
    <property type="nucleotide sequence ID" value="NC_002516.2"/>
</dbReference>
<dbReference type="RefSeq" id="WP_003112641.1">
    <property type="nucleotide sequence ID" value="NZ_QZGE01000015.1"/>
</dbReference>
<dbReference type="PDB" id="3OU8">
    <property type="method" value="X-ray"/>
    <property type="resolution" value="2.51 A"/>
    <property type="chains" value="A/B=2-316"/>
</dbReference>
<dbReference type="PDB" id="3PAN">
    <property type="method" value="X-ray"/>
    <property type="resolution" value="2.63 A"/>
    <property type="chains" value="A/B=2-316"/>
</dbReference>
<dbReference type="PDB" id="3PAO">
    <property type="method" value="X-ray"/>
    <property type="resolution" value="2.49 A"/>
    <property type="chains" value="A/B=2-316"/>
</dbReference>
<dbReference type="PDB" id="3PBM">
    <property type="method" value="X-ray"/>
    <property type="resolution" value="2.59 A"/>
    <property type="chains" value="A/B=2-316"/>
</dbReference>
<dbReference type="PDBsum" id="3OU8"/>
<dbReference type="PDBsum" id="3PAN"/>
<dbReference type="PDBsum" id="3PAO"/>
<dbReference type="PDBsum" id="3PBM"/>
<dbReference type="SMR" id="Q9I6Y4"/>
<dbReference type="FunCoup" id="Q9I6Y4">
    <property type="interactions" value="573"/>
</dbReference>
<dbReference type="STRING" id="208964.PA0148"/>
<dbReference type="PaxDb" id="208964-PA0148"/>
<dbReference type="DNASU" id="879249"/>
<dbReference type="GeneID" id="879249"/>
<dbReference type="KEGG" id="pae:PA0148"/>
<dbReference type="PATRIC" id="fig|208964.12.peg.154"/>
<dbReference type="PseudoCAP" id="PA0148"/>
<dbReference type="HOGENOM" id="CLU_039228_7_0_6"/>
<dbReference type="InParanoid" id="Q9I6Y4"/>
<dbReference type="OrthoDB" id="105475at2"/>
<dbReference type="PhylomeDB" id="Q9I6Y4"/>
<dbReference type="BioCyc" id="PAER208964:G1FZ6-150-MONOMER"/>
<dbReference type="EvolutionaryTrace" id="Q9I6Y4"/>
<dbReference type="Proteomes" id="UP000002438">
    <property type="component" value="Chromosome"/>
</dbReference>
<dbReference type="GO" id="GO:0000034">
    <property type="term" value="F:adenine deaminase activity"/>
    <property type="evidence" value="ECO:0000314"/>
    <property type="project" value="PseudoCAP"/>
</dbReference>
<dbReference type="GO" id="GO:0008270">
    <property type="term" value="F:zinc ion binding"/>
    <property type="evidence" value="ECO:0007669"/>
    <property type="project" value="UniProtKB-UniRule"/>
</dbReference>
<dbReference type="GO" id="GO:0006146">
    <property type="term" value="P:adenine catabolic process"/>
    <property type="evidence" value="ECO:0000318"/>
    <property type="project" value="GO_Central"/>
</dbReference>
<dbReference type="GO" id="GO:0043103">
    <property type="term" value="P:hypoxanthine salvage"/>
    <property type="evidence" value="ECO:0000318"/>
    <property type="project" value="GO_Central"/>
</dbReference>
<dbReference type="GO" id="GO:0009117">
    <property type="term" value="P:nucleotide metabolic process"/>
    <property type="evidence" value="ECO:0007669"/>
    <property type="project" value="UniProtKB-KW"/>
</dbReference>
<dbReference type="CDD" id="cd01320">
    <property type="entry name" value="ADA"/>
    <property type="match status" value="1"/>
</dbReference>
<dbReference type="FunFam" id="3.20.20.140:FF:000039">
    <property type="entry name" value="Adenine deaminase"/>
    <property type="match status" value="1"/>
</dbReference>
<dbReference type="Gene3D" id="3.20.20.140">
    <property type="entry name" value="Metal-dependent hydrolases"/>
    <property type="match status" value="1"/>
</dbReference>
<dbReference type="HAMAP" id="MF_01962">
    <property type="entry name" value="Adenine_deaminase"/>
    <property type="match status" value="1"/>
</dbReference>
<dbReference type="InterPro" id="IPR001365">
    <property type="entry name" value="A_deaminase_dom"/>
</dbReference>
<dbReference type="InterPro" id="IPR028892">
    <property type="entry name" value="ADE"/>
</dbReference>
<dbReference type="InterPro" id="IPR006330">
    <property type="entry name" value="Ado/ade_deaminase"/>
</dbReference>
<dbReference type="InterPro" id="IPR032466">
    <property type="entry name" value="Metal_Hydrolase"/>
</dbReference>
<dbReference type="NCBIfam" id="TIGR01430">
    <property type="entry name" value="aden_deam"/>
    <property type="match status" value="1"/>
</dbReference>
<dbReference type="NCBIfam" id="NF006850">
    <property type="entry name" value="PRK09358.1-6"/>
    <property type="match status" value="1"/>
</dbReference>
<dbReference type="PANTHER" id="PTHR43114">
    <property type="entry name" value="ADENINE DEAMINASE"/>
    <property type="match status" value="1"/>
</dbReference>
<dbReference type="PANTHER" id="PTHR43114:SF6">
    <property type="entry name" value="ADENINE DEAMINASE"/>
    <property type="match status" value="1"/>
</dbReference>
<dbReference type="Pfam" id="PF00962">
    <property type="entry name" value="A_deaminase"/>
    <property type="match status" value="1"/>
</dbReference>
<dbReference type="SUPFAM" id="SSF51556">
    <property type="entry name" value="Metallo-dependent hydrolases"/>
    <property type="match status" value="1"/>
</dbReference>
<protein>
    <recommendedName>
        <fullName evidence="1">Adenine deaminase</fullName>
        <shortName evidence="1">ADE</shortName>
        <ecNumber evidence="1">3.5.4.2</ecNumber>
    </recommendedName>
    <alternativeName>
        <fullName evidence="1">Adenine aminohydrolase</fullName>
        <shortName evidence="1">AAH</shortName>
    </alternativeName>
</protein>